<proteinExistence type="inferred from homology"/>
<sequence length="305" mass="34826">MHKLFILTGPTASGKSEVSKIVAERLGCTIINCDSKQIYQHVPTITDQAEYLRTSPQFRLYGYVHPSNSYSVGLWLEDAKREILLAWEKKSPTIVVGGSGLYISSLIYGLSEIPPADAHIRQKARALLSEVGNDTFFELLLRRDANVCKIDRRNSNQLLRAFEVFESTGVSIFSWRERCPKKRPFENCEVCVLFPPKEELHPKINSRLVDMINSSAVAEVEYLMSLNLPADAPIMKAIGVREVIEYLRGNISLPEAVEAAQRNTRQYAKRQYTWLRRQLPQDAQFLPTREEMVQHLVSRLTETEK</sequence>
<protein>
    <recommendedName>
        <fullName evidence="1">tRNA dimethylallyltransferase</fullName>
        <ecNumber evidence="1">2.5.1.75</ecNumber>
    </recommendedName>
    <alternativeName>
        <fullName evidence="1">Dimethylallyl diphosphate:tRNA dimethylallyltransferase</fullName>
        <shortName evidence="1">DMAPP:tRNA dimethylallyltransferase</shortName>
        <shortName evidence="1">DMATase</shortName>
    </alternativeName>
    <alternativeName>
        <fullName evidence="1">Isopentenyl-diphosphate:tRNA isopentenyltransferase</fullName>
        <shortName evidence="1">IPP transferase</shortName>
        <shortName evidence="1">IPPT</shortName>
        <shortName evidence="1">IPTase</shortName>
    </alternativeName>
</protein>
<name>MIAA_ANAMM</name>
<dbReference type="EC" id="2.5.1.75" evidence="1"/>
<dbReference type="EMBL" id="CP000030">
    <property type="protein sequence ID" value="AAV86700.1"/>
    <property type="molecule type" value="Genomic_DNA"/>
</dbReference>
<dbReference type="RefSeq" id="WP_011114416.1">
    <property type="nucleotide sequence ID" value="NC_004842.2"/>
</dbReference>
<dbReference type="SMR" id="Q5PAI0"/>
<dbReference type="KEGG" id="ama:AM755"/>
<dbReference type="HOGENOM" id="CLU_032616_0_1_5"/>
<dbReference type="GO" id="GO:0005524">
    <property type="term" value="F:ATP binding"/>
    <property type="evidence" value="ECO:0007669"/>
    <property type="project" value="UniProtKB-UniRule"/>
</dbReference>
<dbReference type="GO" id="GO:0052381">
    <property type="term" value="F:tRNA dimethylallyltransferase activity"/>
    <property type="evidence" value="ECO:0007669"/>
    <property type="project" value="UniProtKB-UniRule"/>
</dbReference>
<dbReference type="GO" id="GO:0006400">
    <property type="term" value="P:tRNA modification"/>
    <property type="evidence" value="ECO:0007669"/>
    <property type="project" value="TreeGrafter"/>
</dbReference>
<dbReference type="Gene3D" id="1.10.20.140">
    <property type="match status" value="1"/>
</dbReference>
<dbReference type="Gene3D" id="3.40.50.300">
    <property type="entry name" value="P-loop containing nucleotide triphosphate hydrolases"/>
    <property type="match status" value="1"/>
</dbReference>
<dbReference type="HAMAP" id="MF_00185">
    <property type="entry name" value="IPP_trans"/>
    <property type="match status" value="1"/>
</dbReference>
<dbReference type="InterPro" id="IPR039657">
    <property type="entry name" value="Dimethylallyltransferase"/>
</dbReference>
<dbReference type="InterPro" id="IPR018022">
    <property type="entry name" value="IPT"/>
</dbReference>
<dbReference type="InterPro" id="IPR027417">
    <property type="entry name" value="P-loop_NTPase"/>
</dbReference>
<dbReference type="NCBIfam" id="TIGR00174">
    <property type="entry name" value="miaA"/>
    <property type="match status" value="1"/>
</dbReference>
<dbReference type="PANTHER" id="PTHR11088">
    <property type="entry name" value="TRNA DIMETHYLALLYLTRANSFERASE"/>
    <property type="match status" value="1"/>
</dbReference>
<dbReference type="PANTHER" id="PTHR11088:SF60">
    <property type="entry name" value="TRNA DIMETHYLALLYLTRANSFERASE"/>
    <property type="match status" value="1"/>
</dbReference>
<dbReference type="Pfam" id="PF01715">
    <property type="entry name" value="IPPT"/>
    <property type="match status" value="1"/>
</dbReference>
<dbReference type="SUPFAM" id="SSF52540">
    <property type="entry name" value="P-loop containing nucleoside triphosphate hydrolases"/>
    <property type="match status" value="2"/>
</dbReference>
<accession>Q5PAI0</accession>
<gene>
    <name evidence="1" type="primary">miaA</name>
    <name type="ordered locus">AM755</name>
</gene>
<organism>
    <name type="scientific">Anaplasma marginale (strain St. Maries)</name>
    <dbReference type="NCBI Taxonomy" id="234826"/>
    <lineage>
        <taxon>Bacteria</taxon>
        <taxon>Pseudomonadati</taxon>
        <taxon>Pseudomonadota</taxon>
        <taxon>Alphaproteobacteria</taxon>
        <taxon>Rickettsiales</taxon>
        <taxon>Anaplasmataceae</taxon>
        <taxon>Anaplasma</taxon>
    </lineage>
</organism>
<keyword id="KW-0067">ATP-binding</keyword>
<keyword id="KW-0460">Magnesium</keyword>
<keyword id="KW-0547">Nucleotide-binding</keyword>
<keyword id="KW-0808">Transferase</keyword>
<keyword id="KW-0819">tRNA processing</keyword>
<evidence type="ECO:0000255" key="1">
    <source>
        <dbReference type="HAMAP-Rule" id="MF_00185"/>
    </source>
</evidence>
<reference key="1">
    <citation type="journal article" date="2005" name="Proc. Natl. Acad. Sci. U.S.A.">
        <title>Complete genome sequencing of Anaplasma marginale reveals that the surface is skewed to two superfamilies of outer membrane proteins.</title>
        <authorList>
            <person name="Brayton K.A."/>
            <person name="Kappmeyer L.S."/>
            <person name="Herndon D.R."/>
            <person name="Dark M.J."/>
            <person name="Tibbals D.L."/>
            <person name="Palmer G.H."/>
            <person name="McGuire T.C."/>
            <person name="Knowles D.P. Jr."/>
        </authorList>
    </citation>
    <scope>NUCLEOTIDE SEQUENCE [LARGE SCALE GENOMIC DNA]</scope>
    <source>
        <strain>St. Maries</strain>
    </source>
</reference>
<feature type="chain" id="PRO_0000377065" description="tRNA dimethylallyltransferase">
    <location>
        <begin position="1"/>
        <end position="305"/>
    </location>
</feature>
<feature type="region of interest" description="Interaction with substrate tRNA" evidence="1">
    <location>
        <begin position="34"/>
        <end position="37"/>
    </location>
</feature>
<feature type="binding site" evidence="1">
    <location>
        <begin position="9"/>
        <end position="16"/>
    </location>
    <ligand>
        <name>ATP</name>
        <dbReference type="ChEBI" id="CHEBI:30616"/>
    </ligand>
</feature>
<feature type="binding site" evidence="1">
    <location>
        <begin position="11"/>
        <end position="16"/>
    </location>
    <ligand>
        <name>substrate</name>
    </ligand>
</feature>
<feature type="site" description="Interaction with substrate tRNA" evidence="1">
    <location>
        <position position="99"/>
    </location>
</feature>
<feature type="site" description="Interaction with substrate tRNA" evidence="1">
    <location>
        <position position="121"/>
    </location>
</feature>
<comment type="function">
    <text evidence="1">Catalyzes the transfer of a dimethylallyl group onto the adenine at position 37 in tRNAs that read codons beginning with uridine, leading to the formation of N6-(dimethylallyl)adenosine (i(6)A).</text>
</comment>
<comment type="catalytic activity">
    <reaction evidence="1">
        <text>adenosine(37) in tRNA + dimethylallyl diphosphate = N(6)-dimethylallyladenosine(37) in tRNA + diphosphate</text>
        <dbReference type="Rhea" id="RHEA:26482"/>
        <dbReference type="Rhea" id="RHEA-COMP:10162"/>
        <dbReference type="Rhea" id="RHEA-COMP:10375"/>
        <dbReference type="ChEBI" id="CHEBI:33019"/>
        <dbReference type="ChEBI" id="CHEBI:57623"/>
        <dbReference type="ChEBI" id="CHEBI:74411"/>
        <dbReference type="ChEBI" id="CHEBI:74415"/>
        <dbReference type="EC" id="2.5.1.75"/>
    </reaction>
</comment>
<comment type="cofactor">
    <cofactor evidence="1">
        <name>Mg(2+)</name>
        <dbReference type="ChEBI" id="CHEBI:18420"/>
    </cofactor>
</comment>
<comment type="subunit">
    <text evidence="1">Monomer.</text>
</comment>
<comment type="similarity">
    <text evidence="1">Belongs to the IPP transferase family.</text>
</comment>